<comment type="function">
    <text evidence="1">Specifically methylates the pseudouridine at position 1915 (m3Psi1915) in 23S rRNA.</text>
</comment>
<comment type="catalytic activity">
    <reaction evidence="1">
        <text>pseudouridine(1915) in 23S rRNA + S-adenosyl-L-methionine = N(3)-methylpseudouridine(1915) in 23S rRNA + S-adenosyl-L-homocysteine + H(+)</text>
        <dbReference type="Rhea" id="RHEA:42752"/>
        <dbReference type="Rhea" id="RHEA-COMP:10221"/>
        <dbReference type="Rhea" id="RHEA-COMP:10222"/>
        <dbReference type="ChEBI" id="CHEBI:15378"/>
        <dbReference type="ChEBI" id="CHEBI:57856"/>
        <dbReference type="ChEBI" id="CHEBI:59789"/>
        <dbReference type="ChEBI" id="CHEBI:65314"/>
        <dbReference type="ChEBI" id="CHEBI:74486"/>
        <dbReference type="EC" id="2.1.1.177"/>
    </reaction>
</comment>
<comment type="subunit">
    <text evidence="1">Homodimer.</text>
</comment>
<comment type="subcellular location">
    <subcellularLocation>
        <location evidence="1">Cytoplasm</location>
    </subcellularLocation>
</comment>
<comment type="similarity">
    <text evidence="1">Belongs to the RNA methyltransferase RlmH family.</text>
</comment>
<reference key="1">
    <citation type="journal article" date="2006" name="Proc. Natl. Acad. Sci. U.S.A.">
        <title>Comparative genomics of the lactic acid bacteria.</title>
        <authorList>
            <person name="Makarova K.S."/>
            <person name="Slesarev A."/>
            <person name="Wolf Y.I."/>
            <person name="Sorokin A."/>
            <person name="Mirkin B."/>
            <person name="Koonin E.V."/>
            <person name="Pavlov A."/>
            <person name="Pavlova N."/>
            <person name="Karamychev V."/>
            <person name="Polouchine N."/>
            <person name="Shakhova V."/>
            <person name="Grigoriev I."/>
            <person name="Lou Y."/>
            <person name="Rohksar D."/>
            <person name="Lucas S."/>
            <person name="Huang K."/>
            <person name="Goodstein D.M."/>
            <person name="Hawkins T."/>
            <person name="Plengvidhya V."/>
            <person name="Welker D."/>
            <person name="Hughes J."/>
            <person name="Goh Y."/>
            <person name="Benson A."/>
            <person name="Baldwin K."/>
            <person name="Lee J.-H."/>
            <person name="Diaz-Muniz I."/>
            <person name="Dosti B."/>
            <person name="Smeianov V."/>
            <person name="Wechter W."/>
            <person name="Barabote R."/>
            <person name="Lorca G."/>
            <person name="Altermann E."/>
            <person name="Barrangou R."/>
            <person name="Ganesan B."/>
            <person name="Xie Y."/>
            <person name="Rawsthorne H."/>
            <person name="Tamir D."/>
            <person name="Parker C."/>
            <person name="Breidt F."/>
            <person name="Broadbent J.R."/>
            <person name="Hutkins R."/>
            <person name="O'Sullivan D."/>
            <person name="Steele J."/>
            <person name="Unlu G."/>
            <person name="Saier M.H. Jr."/>
            <person name="Klaenhammer T."/>
            <person name="Richardson P."/>
            <person name="Kozyavkin S."/>
            <person name="Weimer B.C."/>
            <person name="Mills D.A."/>
        </authorList>
    </citation>
    <scope>NUCLEOTIDE SEQUENCE [LARGE SCALE GENOMIC DNA]</scope>
    <source>
        <strain>ATCC 25745 / CCUG 21536 / LMG 10740 / 183-1w</strain>
    </source>
</reference>
<evidence type="ECO:0000255" key="1">
    <source>
        <dbReference type="HAMAP-Rule" id="MF_00658"/>
    </source>
</evidence>
<sequence>MNIKIIVVGKLKEKYLKQGIAEYSKRLSKFCKFQIIEVPDEKAPESLSDAQMNEVKVKEGERILGKIKDRDYVFTLEIKGKERSSEELSAEMAKLATYGNSDITFVIGGSLGLSDAVMKRSNSAISFGRFTLPHQLMRLVLTEQIYRSFMIQAGSPYHK</sequence>
<feature type="chain" id="PRO_1000061817" description="Ribosomal RNA large subunit methyltransferase H">
    <location>
        <begin position="1"/>
        <end position="159"/>
    </location>
</feature>
<feature type="binding site" evidence="1">
    <location>
        <position position="76"/>
    </location>
    <ligand>
        <name>S-adenosyl-L-methionine</name>
        <dbReference type="ChEBI" id="CHEBI:59789"/>
    </ligand>
</feature>
<feature type="binding site" evidence="1">
    <location>
        <position position="108"/>
    </location>
    <ligand>
        <name>S-adenosyl-L-methionine</name>
        <dbReference type="ChEBI" id="CHEBI:59789"/>
    </ligand>
</feature>
<protein>
    <recommendedName>
        <fullName evidence="1">Ribosomal RNA large subunit methyltransferase H</fullName>
        <ecNumber evidence="1">2.1.1.177</ecNumber>
    </recommendedName>
    <alternativeName>
        <fullName evidence="1">23S rRNA (pseudouridine1915-N3)-methyltransferase</fullName>
    </alternativeName>
    <alternativeName>
        <fullName evidence="1">23S rRNA m3Psi1915 methyltransferase</fullName>
    </alternativeName>
    <alternativeName>
        <fullName evidence="1">rRNA (pseudouridine-N3-)-methyltransferase RlmH</fullName>
    </alternativeName>
</protein>
<name>RLMH_PEDPA</name>
<organism>
    <name type="scientific">Pediococcus pentosaceus (strain ATCC 25745 / CCUG 21536 / LMG 10740 / 183-1w)</name>
    <dbReference type="NCBI Taxonomy" id="278197"/>
    <lineage>
        <taxon>Bacteria</taxon>
        <taxon>Bacillati</taxon>
        <taxon>Bacillota</taxon>
        <taxon>Bacilli</taxon>
        <taxon>Lactobacillales</taxon>
        <taxon>Lactobacillaceae</taxon>
        <taxon>Pediococcus</taxon>
    </lineage>
</organism>
<accession>Q03D72</accession>
<keyword id="KW-0963">Cytoplasm</keyword>
<keyword id="KW-0489">Methyltransferase</keyword>
<keyword id="KW-0698">rRNA processing</keyword>
<keyword id="KW-0949">S-adenosyl-L-methionine</keyword>
<keyword id="KW-0808">Transferase</keyword>
<gene>
    <name evidence="1" type="primary">rlmH</name>
    <name type="ordered locus">PEPE_1831</name>
</gene>
<dbReference type="EC" id="2.1.1.177" evidence="1"/>
<dbReference type="EMBL" id="CP000422">
    <property type="protein sequence ID" value="ABJ68850.1"/>
    <property type="molecule type" value="Genomic_DNA"/>
</dbReference>
<dbReference type="RefSeq" id="WP_011673917.1">
    <property type="nucleotide sequence ID" value="NC_008525.1"/>
</dbReference>
<dbReference type="SMR" id="Q03D72"/>
<dbReference type="STRING" id="278197.PEPE_1831"/>
<dbReference type="GeneID" id="33061267"/>
<dbReference type="KEGG" id="ppe:PEPE_1831"/>
<dbReference type="eggNOG" id="COG1576">
    <property type="taxonomic scope" value="Bacteria"/>
</dbReference>
<dbReference type="HOGENOM" id="CLU_100552_0_0_9"/>
<dbReference type="OrthoDB" id="9806643at2"/>
<dbReference type="Proteomes" id="UP000000773">
    <property type="component" value="Chromosome"/>
</dbReference>
<dbReference type="GO" id="GO:0005737">
    <property type="term" value="C:cytoplasm"/>
    <property type="evidence" value="ECO:0007669"/>
    <property type="project" value="UniProtKB-SubCell"/>
</dbReference>
<dbReference type="GO" id="GO:0070038">
    <property type="term" value="F:rRNA (pseudouridine-N3-)-methyltransferase activity"/>
    <property type="evidence" value="ECO:0007669"/>
    <property type="project" value="UniProtKB-UniRule"/>
</dbReference>
<dbReference type="CDD" id="cd18081">
    <property type="entry name" value="RlmH-like"/>
    <property type="match status" value="1"/>
</dbReference>
<dbReference type="Gene3D" id="3.40.1280.10">
    <property type="match status" value="1"/>
</dbReference>
<dbReference type="HAMAP" id="MF_00658">
    <property type="entry name" value="23SrRNA_methyltr_H"/>
    <property type="match status" value="1"/>
</dbReference>
<dbReference type="InterPro" id="IPR029028">
    <property type="entry name" value="Alpha/beta_knot_MTases"/>
</dbReference>
<dbReference type="InterPro" id="IPR003742">
    <property type="entry name" value="RlmH-like"/>
</dbReference>
<dbReference type="InterPro" id="IPR029026">
    <property type="entry name" value="tRNA_m1G_MTases_N"/>
</dbReference>
<dbReference type="NCBIfam" id="NF000985">
    <property type="entry name" value="PRK00103.1-3"/>
    <property type="match status" value="1"/>
</dbReference>
<dbReference type="NCBIfam" id="TIGR00246">
    <property type="entry name" value="tRNA_RlmH_YbeA"/>
    <property type="match status" value="1"/>
</dbReference>
<dbReference type="PANTHER" id="PTHR33603">
    <property type="entry name" value="METHYLTRANSFERASE"/>
    <property type="match status" value="1"/>
</dbReference>
<dbReference type="PANTHER" id="PTHR33603:SF1">
    <property type="entry name" value="RIBOSOMAL RNA LARGE SUBUNIT METHYLTRANSFERASE H"/>
    <property type="match status" value="1"/>
</dbReference>
<dbReference type="Pfam" id="PF02590">
    <property type="entry name" value="SPOUT_MTase"/>
    <property type="match status" value="1"/>
</dbReference>
<dbReference type="PIRSF" id="PIRSF004505">
    <property type="entry name" value="MT_bac"/>
    <property type="match status" value="1"/>
</dbReference>
<dbReference type="SUPFAM" id="SSF75217">
    <property type="entry name" value="alpha/beta knot"/>
    <property type="match status" value="1"/>
</dbReference>
<proteinExistence type="inferred from homology"/>